<feature type="chain" id="PRO_0000315741" description="Protein SPT2 homolog">
    <location>
        <begin position="1"/>
        <end position="581"/>
    </location>
</feature>
<feature type="region of interest" description="Disordered" evidence="2">
    <location>
        <begin position="26"/>
        <end position="50"/>
    </location>
</feature>
<feature type="region of interest" description="Disordered" evidence="2">
    <location>
        <begin position="145"/>
        <end position="495"/>
    </location>
</feature>
<feature type="coiled-coil region" evidence="1">
    <location>
        <begin position="36"/>
        <end position="76"/>
    </location>
</feature>
<feature type="coiled-coil region" evidence="1">
    <location>
        <begin position="276"/>
        <end position="307"/>
    </location>
</feature>
<feature type="compositionally biased region" description="Low complexity" evidence="2">
    <location>
        <begin position="26"/>
        <end position="35"/>
    </location>
</feature>
<feature type="compositionally biased region" description="Basic and acidic residues" evidence="2">
    <location>
        <begin position="162"/>
        <end position="181"/>
    </location>
</feature>
<feature type="compositionally biased region" description="Polar residues" evidence="2">
    <location>
        <begin position="182"/>
        <end position="197"/>
    </location>
</feature>
<feature type="compositionally biased region" description="Polar residues" evidence="2">
    <location>
        <begin position="204"/>
        <end position="213"/>
    </location>
</feature>
<feature type="compositionally biased region" description="Basic and acidic residues" evidence="2">
    <location>
        <begin position="218"/>
        <end position="236"/>
    </location>
</feature>
<feature type="compositionally biased region" description="Basic and acidic residues" evidence="2">
    <location>
        <begin position="256"/>
        <end position="312"/>
    </location>
</feature>
<feature type="compositionally biased region" description="Low complexity" evidence="2">
    <location>
        <begin position="352"/>
        <end position="376"/>
    </location>
</feature>
<feature type="compositionally biased region" description="Polar residues" evidence="2">
    <location>
        <begin position="447"/>
        <end position="461"/>
    </location>
</feature>
<feature type="compositionally biased region" description="Acidic residues" evidence="2">
    <location>
        <begin position="486"/>
        <end position="495"/>
    </location>
</feature>
<feature type="splice variant" id="VSP_030692" description="In isoform 2." evidence="3">
    <original>M</original>
    <variation>S</variation>
    <location>
        <position position="554"/>
    </location>
</feature>
<feature type="splice variant" id="VSP_030693" description="In isoform 2." evidence="3">
    <location>
        <begin position="555"/>
        <end position="581"/>
    </location>
</feature>
<sequence>MDFGDLLRYAKKNSDAVTKEVGQGKYYSTKYSPPKKQSKESKQLSSNIQKFLQKKEAEEAEKKRLERQKLNDLLAKRDEKSKNKIRKMLKVTKSANKSVLEDAKDYEGAIDGHEAGEGQGDDYGYVSTEANAFYDKYIEKVRDVQEDKGFTPSRPQSLKDLSGTKERVKAAITREREEAKGNTRQKSSTSTLPSSATKSKESSVARSYSTSKTLYDPNAEKLEEERKKRQEEEQRRAKIKRPAQPPPMDFQALLRLAEKKQHEPVVFEVEKKKEPERLLSAREKRELEERQRQQEQRAQRLKMRESEGKETPKSIPNRMEPNGRIPKLNQAKPANAPSDSFKKPTAPQPTKSSASSTSLSSSNSHSSASRSSVSSSRPATKSAQLTARPGATASAVGKPSSSSSRDVPSKNPYAATSLKGTVREFPPRDQSSISTLDRRKIPAAAKTRQTPSSDVQRSQGGRQFPPADVKRRKPNEPPVTKRRIYDDDDEDEYDSELDDFIDDGDCEEDISSHIRDIFGYDKRRYQGIDDDDRGMESSFAQVQREEFISKKLGMQEDLEDMRMEAAHKKQKKLVAKISSRS</sequence>
<reference key="1">
    <citation type="journal article" date="2000" name="Science">
        <title>The genome sequence of Drosophila melanogaster.</title>
        <authorList>
            <person name="Adams M.D."/>
            <person name="Celniker S.E."/>
            <person name="Holt R.A."/>
            <person name="Evans C.A."/>
            <person name="Gocayne J.D."/>
            <person name="Amanatides P.G."/>
            <person name="Scherer S.E."/>
            <person name="Li P.W."/>
            <person name="Hoskins R.A."/>
            <person name="Galle R.F."/>
            <person name="George R.A."/>
            <person name="Lewis S.E."/>
            <person name="Richards S."/>
            <person name="Ashburner M."/>
            <person name="Henderson S.N."/>
            <person name="Sutton G.G."/>
            <person name="Wortman J.R."/>
            <person name="Yandell M.D."/>
            <person name="Zhang Q."/>
            <person name="Chen L.X."/>
            <person name="Brandon R.C."/>
            <person name="Rogers Y.-H.C."/>
            <person name="Blazej R.G."/>
            <person name="Champe M."/>
            <person name="Pfeiffer B.D."/>
            <person name="Wan K.H."/>
            <person name="Doyle C."/>
            <person name="Baxter E.G."/>
            <person name="Helt G."/>
            <person name="Nelson C.R."/>
            <person name="Miklos G.L.G."/>
            <person name="Abril J.F."/>
            <person name="Agbayani A."/>
            <person name="An H.-J."/>
            <person name="Andrews-Pfannkoch C."/>
            <person name="Baldwin D."/>
            <person name="Ballew R.M."/>
            <person name="Basu A."/>
            <person name="Baxendale J."/>
            <person name="Bayraktaroglu L."/>
            <person name="Beasley E.M."/>
            <person name="Beeson K.Y."/>
            <person name="Benos P.V."/>
            <person name="Berman B.P."/>
            <person name="Bhandari D."/>
            <person name="Bolshakov S."/>
            <person name="Borkova D."/>
            <person name="Botchan M.R."/>
            <person name="Bouck J."/>
            <person name="Brokstein P."/>
            <person name="Brottier P."/>
            <person name="Burtis K.C."/>
            <person name="Busam D.A."/>
            <person name="Butler H."/>
            <person name="Cadieu E."/>
            <person name="Center A."/>
            <person name="Chandra I."/>
            <person name="Cherry J.M."/>
            <person name="Cawley S."/>
            <person name="Dahlke C."/>
            <person name="Davenport L.B."/>
            <person name="Davies P."/>
            <person name="de Pablos B."/>
            <person name="Delcher A."/>
            <person name="Deng Z."/>
            <person name="Mays A.D."/>
            <person name="Dew I."/>
            <person name="Dietz S.M."/>
            <person name="Dodson K."/>
            <person name="Doup L.E."/>
            <person name="Downes M."/>
            <person name="Dugan-Rocha S."/>
            <person name="Dunkov B.C."/>
            <person name="Dunn P."/>
            <person name="Durbin K.J."/>
            <person name="Evangelista C.C."/>
            <person name="Ferraz C."/>
            <person name="Ferriera S."/>
            <person name="Fleischmann W."/>
            <person name="Fosler C."/>
            <person name="Gabrielian A.E."/>
            <person name="Garg N.S."/>
            <person name="Gelbart W.M."/>
            <person name="Glasser K."/>
            <person name="Glodek A."/>
            <person name="Gong F."/>
            <person name="Gorrell J.H."/>
            <person name="Gu Z."/>
            <person name="Guan P."/>
            <person name="Harris M."/>
            <person name="Harris N.L."/>
            <person name="Harvey D.A."/>
            <person name="Heiman T.J."/>
            <person name="Hernandez J.R."/>
            <person name="Houck J."/>
            <person name="Hostin D."/>
            <person name="Houston K.A."/>
            <person name="Howland T.J."/>
            <person name="Wei M.-H."/>
            <person name="Ibegwam C."/>
            <person name="Jalali M."/>
            <person name="Kalush F."/>
            <person name="Karpen G.H."/>
            <person name="Ke Z."/>
            <person name="Kennison J.A."/>
            <person name="Ketchum K.A."/>
            <person name="Kimmel B.E."/>
            <person name="Kodira C.D."/>
            <person name="Kraft C.L."/>
            <person name="Kravitz S."/>
            <person name="Kulp D."/>
            <person name="Lai Z."/>
            <person name="Lasko P."/>
            <person name="Lei Y."/>
            <person name="Levitsky A.A."/>
            <person name="Li J.H."/>
            <person name="Li Z."/>
            <person name="Liang Y."/>
            <person name="Lin X."/>
            <person name="Liu X."/>
            <person name="Mattei B."/>
            <person name="McIntosh T.C."/>
            <person name="McLeod M.P."/>
            <person name="McPherson D."/>
            <person name="Merkulov G."/>
            <person name="Milshina N.V."/>
            <person name="Mobarry C."/>
            <person name="Morris J."/>
            <person name="Moshrefi A."/>
            <person name="Mount S.M."/>
            <person name="Moy M."/>
            <person name="Murphy B."/>
            <person name="Murphy L."/>
            <person name="Muzny D.M."/>
            <person name="Nelson D.L."/>
            <person name="Nelson D.R."/>
            <person name="Nelson K.A."/>
            <person name="Nixon K."/>
            <person name="Nusskern D.R."/>
            <person name="Pacleb J.M."/>
            <person name="Palazzolo M."/>
            <person name="Pittman G.S."/>
            <person name="Pan S."/>
            <person name="Pollard J."/>
            <person name="Puri V."/>
            <person name="Reese M.G."/>
            <person name="Reinert K."/>
            <person name="Remington K."/>
            <person name="Saunders R.D.C."/>
            <person name="Scheeler F."/>
            <person name="Shen H."/>
            <person name="Shue B.C."/>
            <person name="Siden-Kiamos I."/>
            <person name="Simpson M."/>
            <person name="Skupski M.P."/>
            <person name="Smith T.J."/>
            <person name="Spier E."/>
            <person name="Spradling A.C."/>
            <person name="Stapleton M."/>
            <person name="Strong R."/>
            <person name="Sun E."/>
            <person name="Svirskas R."/>
            <person name="Tector C."/>
            <person name="Turner R."/>
            <person name="Venter E."/>
            <person name="Wang A.H."/>
            <person name="Wang X."/>
            <person name="Wang Z.-Y."/>
            <person name="Wassarman D.A."/>
            <person name="Weinstock G.M."/>
            <person name="Weissenbach J."/>
            <person name="Williams S.M."/>
            <person name="Woodage T."/>
            <person name="Worley K.C."/>
            <person name="Wu D."/>
            <person name="Yang S."/>
            <person name="Yao Q.A."/>
            <person name="Ye J."/>
            <person name="Yeh R.-F."/>
            <person name="Zaveri J.S."/>
            <person name="Zhan M."/>
            <person name="Zhang G."/>
            <person name="Zhao Q."/>
            <person name="Zheng L."/>
            <person name="Zheng X.H."/>
            <person name="Zhong F.N."/>
            <person name="Zhong W."/>
            <person name="Zhou X."/>
            <person name="Zhu S.C."/>
            <person name="Zhu X."/>
            <person name="Smith H.O."/>
            <person name="Gibbs R.A."/>
            <person name="Myers E.W."/>
            <person name="Rubin G.M."/>
            <person name="Venter J.C."/>
        </authorList>
    </citation>
    <scope>NUCLEOTIDE SEQUENCE [LARGE SCALE GENOMIC DNA]</scope>
    <source>
        <strain>Berkeley</strain>
    </source>
</reference>
<reference key="2">
    <citation type="journal article" date="2002" name="Genome Biol.">
        <title>Annotation of the Drosophila melanogaster euchromatic genome: a systematic review.</title>
        <authorList>
            <person name="Misra S."/>
            <person name="Crosby M.A."/>
            <person name="Mungall C.J."/>
            <person name="Matthews B.B."/>
            <person name="Campbell K.S."/>
            <person name="Hradecky P."/>
            <person name="Huang Y."/>
            <person name="Kaminker J.S."/>
            <person name="Millburn G.H."/>
            <person name="Prochnik S.E."/>
            <person name="Smith C.D."/>
            <person name="Tupy J.L."/>
            <person name="Whitfield E.J."/>
            <person name="Bayraktaroglu L."/>
            <person name="Berman B.P."/>
            <person name="Bettencourt B.R."/>
            <person name="Celniker S.E."/>
            <person name="de Grey A.D.N.J."/>
            <person name="Drysdale R.A."/>
            <person name="Harris N.L."/>
            <person name="Richter J."/>
            <person name="Russo S."/>
            <person name="Schroeder A.J."/>
            <person name="Shu S.Q."/>
            <person name="Stapleton M."/>
            <person name="Yamada C."/>
            <person name="Ashburner M."/>
            <person name="Gelbart W.M."/>
            <person name="Rubin G.M."/>
            <person name="Lewis S.E."/>
        </authorList>
    </citation>
    <scope>GENOME REANNOTATION</scope>
    <scope>ALTERNATIVE SPLICING</scope>
    <source>
        <strain>Berkeley</strain>
    </source>
</reference>
<reference key="3">
    <citation type="journal article" date="2002" name="Genome Biol.">
        <title>A Drosophila full-length cDNA resource.</title>
        <authorList>
            <person name="Stapleton M."/>
            <person name="Carlson J.W."/>
            <person name="Brokstein P."/>
            <person name="Yu C."/>
            <person name="Champe M."/>
            <person name="George R.A."/>
            <person name="Guarin H."/>
            <person name="Kronmiller B."/>
            <person name="Pacleb J.M."/>
            <person name="Park S."/>
            <person name="Wan K.H."/>
            <person name="Rubin G.M."/>
            <person name="Celniker S.E."/>
        </authorList>
    </citation>
    <scope>NUCLEOTIDE SEQUENCE [LARGE SCALE MRNA]</scope>
    <source>
        <strain>Berkeley</strain>
        <tissue>Embryo</tissue>
    </source>
</reference>
<comment type="alternative products">
    <event type="alternative splicing"/>
    <isoform>
        <id>Q8IMP6-1</id>
        <name>1</name>
        <sequence type="displayed"/>
    </isoform>
    <isoform>
        <id>Q8IMP6-2</id>
        <name>2</name>
        <sequence type="described" ref="VSP_030692 VSP_030693"/>
    </isoform>
</comment>
<comment type="similarity">
    <text evidence="3">Belongs to the SPT2 family.</text>
</comment>
<comment type="sequence caution" evidence="3">
    <conflict type="frameshift">
        <sequence resource="EMBL-CDS" id="AAL49211"/>
    </conflict>
</comment>
<organism>
    <name type="scientific">Drosophila melanogaster</name>
    <name type="common">Fruit fly</name>
    <dbReference type="NCBI Taxonomy" id="7227"/>
    <lineage>
        <taxon>Eukaryota</taxon>
        <taxon>Metazoa</taxon>
        <taxon>Ecdysozoa</taxon>
        <taxon>Arthropoda</taxon>
        <taxon>Hexapoda</taxon>
        <taxon>Insecta</taxon>
        <taxon>Pterygota</taxon>
        <taxon>Neoptera</taxon>
        <taxon>Endopterygota</taxon>
        <taxon>Diptera</taxon>
        <taxon>Brachycera</taxon>
        <taxon>Muscomorpha</taxon>
        <taxon>Ephydroidea</taxon>
        <taxon>Drosophilidae</taxon>
        <taxon>Drosophila</taxon>
        <taxon>Sophophora</taxon>
    </lineage>
</organism>
<keyword id="KW-0025">Alternative splicing</keyword>
<keyword id="KW-0175">Coiled coil</keyword>
<keyword id="KW-1185">Reference proteome</keyword>
<proteinExistence type="evidence at transcript level"/>
<protein>
    <recommendedName>
        <fullName>Protein SPT2 homolog</fullName>
    </recommendedName>
</protein>
<accession>Q8IMP6</accession>
<accession>Q8SYF3</accession>
<accession>Q9Y132</accession>
<name>SPT2_DROME</name>
<dbReference type="EMBL" id="AE014297">
    <property type="protein sequence ID" value="AAN14396.1"/>
    <property type="molecule type" value="Genomic_DNA"/>
</dbReference>
<dbReference type="EMBL" id="AE014297">
    <property type="protein sequence ID" value="AAF56668.1"/>
    <property type="molecule type" value="Genomic_DNA"/>
</dbReference>
<dbReference type="EMBL" id="AY071589">
    <property type="protein sequence ID" value="AAL49211.1"/>
    <property type="status" value="ALT_FRAME"/>
    <property type="molecule type" value="mRNA"/>
</dbReference>
<dbReference type="RefSeq" id="NP_651537.3">
    <property type="nucleotide sequence ID" value="NM_143280.3"/>
</dbReference>
<dbReference type="RefSeq" id="NP_733196.1">
    <molecule id="Q8IMP6-1"/>
    <property type="nucleotide sequence ID" value="NM_170317.2"/>
</dbReference>
<dbReference type="BioGRID" id="68155">
    <property type="interactions" value="2"/>
</dbReference>
<dbReference type="FunCoup" id="Q8IMP6">
    <property type="interactions" value="1058"/>
</dbReference>
<dbReference type="IntAct" id="Q8IMP6">
    <property type="interactions" value="8"/>
</dbReference>
<dbReference type="STRING" id="7227.FBpp0084476"/>
<dbReference type="PaxDb" id="7227-FBpp0084476"/>
<dbReference type="EnsemblMetazoa" id="FBtr0085106">
    <molecule id="Q8IMP6-1"/>
    <property type="protein sequence ID" value="FBpp0084476"/>
    <property type="gene ID" value="FBgn0027574"/>
</dbReference>
<dbReference type="GeneID" id="43266"/>
<dbReference type="KEGG" id="dme:Dmel_CG5815"/>
<dbReference type="UCSC" id="CG5815-RA">
    <molecule id="Q8IMP6-1"/>
    <property type="organism name" value="d. melanogaster"/>
</dbReference>
<dbReference type="AGR" id="FB:FBgn0027574"/>
<dbReference type="FlyBase" id="FBgn0027574">
    <property type="gene designation" value="CG5815"/>
</dbReference>
<dbReference type="VEuPathDB" id="VectorBase:FBgn0027574"/>
<dbReference type="eggNOG" id="ENOG502QWHS">
    <property type="taxonomic scope" value="Eukaryota"/>
</dbReference>
<dbReference type="InParanoid" id="Q8IMP6"/>
<dbReference type="OMA" id="GPMATPH"/>
<dbReference type="OrthoDB" id="6259853at2759"/>
<dbReference type="PhylomeDB" id="Q8IMP6"/>
<dbReference type="BioGRID-ORCS" id="43266">
    <property type="hits" value="0 hits in 1 CRISPR screen"/>
</dbReference>
<dbReference type="GenomeRNAi" id="43266"/>
<dbReference type="PRO" id="PR:Q8IMP6"/>
<dbReference type="Proteomes" id="UP000000803">
    <property type="component" value="Chromosome 3R"/>
</dbReference>
<dbReference type="Bgee" id="FBgn0027574">
    <property type="expression patterns" value="Expressed in adult Malpighian tubule tiny cell (Drosophila) in Malpighian tubule and 99 other cell types or tissues"/>
</dbReference>
<dbReference type="ExpressionAtlas" id="Q8IMP6">
    <property type="expression patterns" value="baseline and differential"/>
</dbReference>
<dbReference type="GO" id="GO:0005730">
    <property type="term" value="C:nucleolus"/>
    <property type="evidence" value="ECO:0000318"/>
    <property type="project" value="GO_Central"/>
</dbReference>
<dbReference type="GO" id="GO:0003677">
    <property type="term" value="F:DNA binding"/>
    <property type="evidence" value="ECO:0000318"/>
    <property type="project" value="GO_Central"/>
</dbReference>
<dbReference type="GO" id="GO:0042393">
    <property type="term" value="F:histone binding"/>
    <property type="evidence" value="ECO:0000318"/>
    <property type="project" value="GO_Central"/>
</dbReference>
<dbReference type="GO" id="GO:0006334">
    <property type="term" value="P:nucleosome assembly"/>
    <property type="evidence" value="ECO:0000318"/>
    <property type="project" value="GO_Central"/>
</dbReference>
<dbReference type="GO" id="GO:0006360">
    <property type="term" value="P:transcription by RNA polymerase I"/>
    <property type="evidence" value="ECO:0000318"/>
    <property type="project" value="GO_Central"/>
</dbReference>
<dbReference type="InterPro" id="IPR013256">
    <property type="entry name" value="Chromatin_SPT2"/>
</dbReference>
<dbReference type="InterPro" id="IPR054552">
    <property type="entry name" value="SPT2_N"/>
</dbReference>
<dbReference type="PANTHER" id="PTHR22691:SF8">
    <property type="entry name" value="PROTEIN SPT2 HOMOLOG"/>
    <property type="match status" value="1"/>
</dbReference>
<dbReference type="PANTHER" id="PTHR22691">
    <property type="entry name" value="YEAST SPT2-RELATED"/>
    <property type="match status" value="1"/>
</dbReference>
<dbReference type="Pfam" id="PF08243">
    <property type="entry name" value="SPT2"/>
    <property type="match status" value="1"/>
</dbReference>
<dbReference type="Pfam" id="PF22878">
    <property type="entry name" value="SPT2_N"/>
    <property type="match status" value="1"/>
</dbReference>
<dbReference type="SMART" id="SM00784">
    <property type="entry name" value="SPT2"/>
    <property type="match status" value="1"/>
</dbReference>
<gene>
    <name type="ORF">CG5815</name>
</gene>
<evidence type="ECO:0000255" key="1"/>
<evidence type="ECO:0000256" key="2">
    <source>
        <dbReference type="SAM" id="MobiDB-lite"/>
    </source>
</evidence>
<evidence type="ECO:0000305" key="3"/>